<accession>Q9SAD3</accession>
<feature type="chain" id="PRO_0000438467" description="Cyclin-dependent protein kinase inhibitor SMR8">
    <location>
        <begin position="1"/>
        <end position="110"/>
    </location>
</feature>
<keyword id="KW-0131">Cell cycle</keyword>
<keyword id="KW-0649">Protein kinase inhibitor</keyword>
<keyword id="KW-1185">Reference proteome</keyword>
<dbReference type="EMBL" id="AC007354">
    <property type="protein sequence ID" value="AAD31344.1"/>
    <property type="molecule type" value="Genomic_DNA"/>
</dbReference>
<dbReference type="EMBL" id="CP002684">
    <property type="protein sequence ID" value="AEE28629.1"/>
    <property type="molecule type" value="Genomic_DNA"/>
</dbReference>
<dbReference type="EMBL" id="BT012351">
    <property type="protein sequence ID" value="AAS77476.1"/>
    <property type="molecule type" value="mRNA"/>
</dbReference>
<dbReference type="EMBL" id="BT012362">
    <property type="protein sequence ID" value="AAS88752.1"/>
    <property type="molecule type" value="mRNA"/>
</dbReference>
<dbReference type="PIR" id="C86240">
    <property type="entry name" value="C86240"/>
</dbReference>
<dbReference type="RefSeq" id="NP_172539.1">
    <property type="nucleotide sequence ID" value="NM_100945.3"/>
</dbReference>
<dbReference type="FunCoup" id="Q9SAD3">
    <property type="interactions" value="22"/>
</dbReference>
<dbReference type="IntAct" id="Q9SAD3">
    <property type="interactions" value="9"/>
</dbReference>
<dbReference type="STRING" id="3702.Q9SAD3"/>
<dbReference type="PaxDb" id="3702-AT1G10690.1"/>
<dbReference type="EnsemblPlants" id="AT1G10690.1">
    <property type="protein sequence ID" value="AT1G10690.1"/>
    <property type="gene ID" value="AT1G10690"/>
</dbReference>
<dbReference type="GeneID" id="837612"/>
<dbReference type="Gramene" id="AT1G10690.1">
    <property type="protein sequence ID" value="AT1G10690.1"/>
    <property type="gene ID" value="AT1G10690"/>
</dbReference>
<dbReference type="KEGG" id="ath:AT1G10690"/>
<dbReference type="Araport" id="AT1G10690"/>
<dbReference type="TAIR" id="AT1G10690">
    <property type="gene designation" value="SMR8"/>
</dbReference>
<dbReference type="eggNOG" id="ENOG502R1KK">
    <property type="taxonomic scope" value="Eukaryota"/>
</dbReference>
<dbReference type="HOGENOM" id="CLU_2226943_0_0_1"/>
<dbReference type="InParanoid" id="Q9SAD3"/>
<dbReference type="OMA" id="KPHHQLD"/>
<dbReference type="PhylomeDB" id="Q9SAD3"/>
<dbReference type="PRO" id="PR:Q9SAD3"/>
<dbReference type="Proteomes" id="UP000006548">
    <property type="component" value="Chromosome 1"/>
</dbReference>
<dbReference type="ExpressionAtlas" id="Q9SAD3">
    <property type="expression patterns" value="baseline and differential"/>
</dbReference>
<dbReference type="GO" id="GO:0004860">
    <property type="term" value="F:protein kinase inhibitor activity"/>
    <property type="evidence" value="ECO:0007669"/>
    <property type="project" value="UniProtKB-KW"/>
</dbReference>
<dbReference type="GO" id="GO:0032875">
    <property type="term" value="P:regulation of DNA endoreduplication"/>
    <property type="evidence" value="ECO:0007669"/>
    <property type="project" value="InterPro"/>
</dbReference>
<dbReference type="InterPro" id="IPR040389">
    <property type="entry name" value="SMR"/>
</dbReference>
<dbReference type="PANTHER" id="PTHR33142">
    <property type="entry name" value="CYCLIN-DEPENDENT PROTEIN KINASE INHIBITOR SMR13"/>
    <property type="match status" value="1"/>
</dbReference>
<dbReference type="PANTHER" id="PTHR33142:SF39">
    <property type="entry name" value="CYCLIN-DEPENDENT PROTEIN KINASE INHIBITOR SMR8"/>
    <property type="match status" value="1"/>
</dbReference>
<protein>
    <recommendedName>
        <fullName evidence="4 5 6">Cyclin-dependent protein kinase inhibitor SMR8</fullName>
    </recommendedName>
    <alternativeName>
        <fullName evidence="4 5 6">Protein SIAMESE-RELATED 8</fullName>
    </alternativeName>
</protein>
<gene>
    <name evidence="4 5 6" type="primary">SMR8</name>
    <name evidence="7" type="ordered locus">At1g10690</name>
    <name evidence="8" type="ORF">T16B5.17</name>
</gene>
<proteinExistence type="evidence at protein level"/>
<comment type="function">
    <text evidence="1">Probable cyclin-dependent protein kinase (CDK) inhibitor that functions as a repressor of mitosis in the endoreduplication cell cycle.</text>
</comment>
<comment type="subunit">
    <text evidence="2">Interacts with CDKA-1 and D-type cyclins (PubMed:20706207).</text>
</comment>
<comment type="tissue specificity">
    <text evidence="3">Expressed in the root vascular tissue (PubMed:24399300).</text>
</comment>
<organism>
    <name type="scientific">Arabidopsis thaliana</name>
    <name type="common">Mouse-ear cress</name>
    <dbReference type="NCBI Taxonomy" id="3702"/>
    <lineage>
        <taxon>Eukaryota</taxon>
        <taxon>Viridiplantae</taxon>
        <taxon>Streptophyta</taxon>
        <taxon>Embryophyta</taxon>
        <taxon>Tracheophyta</taxon>
        <taxon>Spermatophyta</taxon>
        <taxon>Magnoliopsida</taxon>
        <taxon>eudicotyledons</taxon>
        <taxon>Gunneridae</taxon>
        <taxon>Pentapetalae</taxon>
        <taxon>rosids</taxon>
        <taxon>malvids</taxon>
        <taxon>Brassicales</taxon>
        <taxon>Brassicaceae</taxon>
        <taxon>Camelineae</taxon>
        <taxon>Arabidopsis</taxon>
    </lineage>
</organism>
<sequence length="110" mass="12166">MGYSGKPHHQLDGEIRESTDGKKWVIAGIPSRSPLKQINLSPGVTVTETEEQDQCPTTPTAVSVRIPRVPPCPAAPKKRKPSLKCSYVTVTRDYFSPPDLETVFIQRASY</sequence>
<evidence type="ECO:0000250" key="1">
    <source>
        <dbReference type="UniProtKB" id="Q9LZ78"/>
    </source>
</evidence>
<evidence type="ECO:0000269" key="2">
    <source>
    </source>
</evidence>
<evidence type="ECO:0000269" key="3">
    <source>
    </source>
</evidence>
<evidence type="ECO:0000303" key="4">
    <source>
    </source>
</evidence>
<evidence type="ECO:0000303" key="5">
    <source>
    </source>
</evidence>
<evidence type="ECO:0000303" key="6">
    <source>
    </source>
</evidence>
<evidence type="ECO:0000312" key="7">
    <source>
        <dbReference type="Araport" id="AT1G10690"/>
    </source>
</evidence>
<evidence type="ECO:0000312" key="8">
    <source>
        <dbReference type="EMBL" id="AAD31344.1"/>
    </source>
</evidence>
<reference key="1">
    <citation type="journal article" date="2000" name="Nature">
        <title>Sequence and analysis of chromosome 1 of the plant Arabidopsis thaliana.</title>
        <authorList>
            <person name="Theologis A."/>
            <person name="Ecker J.R."/>
            <person name="Palm C.J."/>
            <person name="Federspiel N.A."/>
            <person name="Kaul S."/>
            <person name="White O."/>
            <person name="Alonso J."/>
            <person name="Altafi H."/>
            <person name="Araujo R."/>
            <person name="Bowman C.L."/>
            <person name="Brooks S.Y."/>
            <person name="Buehler E."/>
            <person name="Chan A."/>
            <person name="Chao Q."/>
            <person name="Chen H."/>
            <person name="Cheuk R.F."/>
            <person name="Chin C.W."/>
            <person name="Chung M.K."/>
            <person name="Conn L."/>
            <person name="Conway A.B."/>
            <person name="Conway A.R."/>
            <person name="Creasy T.H."/>
            <person name="Dewar K."/>
            <person name="Dunn P."/>
            <person name="Etgu P."/>
            <person name="Feldblyum T.V."/>
            <person name="Feng J.-D."/>
            <person name="Fong B."/>
            <person name="Fujii C.Y."/>
            <person name="Gill J.E."/>
            <person name="Goldsmith A.D."/>
            <person name="Haas B."/>
            <person name="Hansen N.F."/>
            <person name="Hughes B."/>
            <person name="Huizar L."/>
            <person name="Hunter J.L."/>
            <person name="Jenkins J."/>
            <person name="Johnson-Hopson C."/>
            <person name="Khan S."/>
            <person name="Khaykin E."/>
            <person name="Kim C.J."/>
            <person name="Koo H.L."/>
            <person name="Kremenetskaia I."/>
            <person name="Kurtz D.B."/>
            <person name="Kwan A."/>
            <person name="Lam B."/>
            <person name="Langin-Hooper S."/>
            <person name="Lee A."/>
            <person name="Lee J.M."/>
            <person name="Lenz C.A."/>
            <person name="Li J.H."/>
            <person name="Li Y.-P."/>
            <person name="Lin X."/>
            <person name="Liu S.X."/>
            <person name="Liu Z.A."/>
            <person name="Luros J.S."/>
            <person name="Maiti R."/>
            <person name="Marziali A."/>
            <person name="Militscher J."/>
            <person name="Miranda M."/>
            <person name="Nguyen M."/>
            <person name="Nierman W.C."/>
            <person name="Osborne B.I."/>
            <person name="Pai G."/>
            <person name="Peterson J."/>
            <person name="Pham P.K."/>
            <person name="Rizzo M."/>
            <person name="Rooney T."/>
            <person name="Rowley D."/>
            <person name="Sakano H."/>
            <person name="Salzberg S.L."/>
            <person name="Schwartz J.R."/>
            <person name="Shinn P."/>
            <person name="Southwick A.M."/>
            <person name="Sun H."/>
            <person name="Tallon L.J."/>
            <person name="Tambunga G."/>
            <person name="Toriumi M.J."/>
            <person name="Town C.D."/>
            <person name="Utterback T."/>
            <person name="Van Aken S."/>
            <person name="Vaysberg M."/>
            <person name="Vysotskaia V.S."/>
            <person name="Walker M."/>
            <person name="Wu D."/>
            <person name="Yu G."/>
            <person name="Fraser C.M."/>
            <person name="Venter J.C."/>
            <person name="Davis R.W."/>
        </authorList>
    </citation>
    <scope>NUCLEOTIDE SEQUENCE [LARGE SCALE GENOMIC DNA]</scope>
    <source>
        <strain>cv. Columbia</strain>
    </source>
</reference>
<reference key="2">
    <citation type="journal article" date="2017" name="Plant J.">
        <title>Araport11: a complete reannotation of the Arabidopsis thaliana reference genome.</title>
        <authorList>
            <person name="Cheng C.Y."/>
            <person name="Krishnakumar V."/>
            <person name="Chan A.P."/>
            <person name="Thibaud-Nissen F."/>
            <person name="Schobel S."/>
            <person name="Town C.D."/>
        </authorList>
    </citation>
    <scope>GENOME REANNOTATION</scope>
    <source>
        <strain>cv. Columbia</strain>
    </source>
</reference>
<reference key="3">
    <citation type="submission" date="2004-04" db="EMBL/GenBank/DDBJ databases">
        <title>Arabidopsis ORF clones.</title>
        <authorList>
            <person name="Shinn P."/>
            <person name="Chen H."/>
            <person name="Cheuk R."/>
            <person name="Kim C.J."/>
            <person name="Ecker J.R."/>
        </authorList>
    </citation>
    <scope>NUCLEOTIDE SEQUENCE [LARGE SCALE MRNA]</scope>
    <source>
        <strain>cv. Columbia</strain>
    </source>
</reference>
<reference key="4">
    <citation type="journal article" date="2010" name="Mol. Syst. Biol.">
        <title>Targeted interactomics reveals a complex core cell cycle machinery in Arabidopsis thaliana.</title>
        <authorList>
            <person name="Van Leene J."/>
            <person name="Hollunder J."/>
            <person name="Eeckhout D."/>
            <person name="Persiau G."/>
            <person name="Van De Slijke E."/>
            <person name="Stals H."/>
            <person name="Van Isterdael G."/>
            <person name="Verkest A."/>
            <person name="Neirynck S."/>
            <person name="Buffel Y."/>
            <person name="De Bodt S."/>
            <person name="Maere S."/>
            <person name="Laukens K."/>
            <person name="Pharazyn A."/>
            <person name="Ferreira P.C.G."/>
            <person name="Eloy N."/>
            <person name="Renne C."/>
            <person name="Meyer C."/>
            <person name="Faure J.-D."/>
            <person name="Steinbrenner J."/>
            <person name="Beynon J."/>
            <person name="Larkin J.C."/>
            <person name="Van de Peer Y."/>
            <person name="Hilson P."/>
            <person name="Kuiper M."/>
            <person name="De Veylder L."/>
            <person name="Van Onckelen H."/>
            <person name="Inze D."/>
            <person name="Witters E."/>
            <person name="De Jaeger G."/>
        </authorList>
    </citation>
    <scope>INTERACTION WITH CDKA-1 AND D-TYPE CYCLINS</scope>
    <scope>GENE FAMILY</scope>
    <scope>NOMENCLATURE</scope>
</reference>
<reference key="5">
    <citation type="journal article" date="2014" name="Plant Cell">
        <title>The Arabidopsis SIAMESE-RELATED cyclin-dependent kinase inhibitors SMR5 and SMR7 regulate the DNA damage checkpoint in response to reactive oxygen species.</title>
        <authorList>
            <person name="Yi D."/>
            <person name="Alvim Kamei C.L."/>
            <person name="Cools T."/>
            <person name="Vanderauwera S."/>
            <person name="Takahashi N."/>
            <person name="Okushima Y."/>
            <person name="Eekhout T."/>
            <person name="Yoshiyama K.O."/>
            <person name="Larkin J."/>
            <person name="Van den Daele H."/>
            <person name="Conklin P."/>
            <person name="Britt A."/>
            <person name="Umeda M."/>
            <person name="De Veylder L."/>
        </authorList>
    </citation>
    <scope>TISSUE SPECIFICITY</scope>
    <scope>GENE FAMILY</scope>
    <scope>NOMENCLATURE</scope>
</reference>
<reference key="6">
    <citation type="journal article" date="2015" name="Plant Cell">
        <title>Functional conservation in the SIAMESE-RELATED family of cyclin-dependent kinase inhibitors in land plants.</title>
        <authorList>
            <person name="Kumar N."/>
            <person name="Harashima H."/>
            <person name="Kalve S."/>
            <person name="Bramsiepe J."/>
            <person name="Wang K."/>
            <person name="Sizani B.L."/>
            <person name="Bertrand L.L."/>
            <person name="Johnson M.C."/>
            <person name="Faulk C."/>
            <person name="Dale R."/>
            <person name="Simmons L.A."/>
            <person name="Churchman M.L."/>
            <person name="Sugimoto K."/>
            <person name="Kato N."/>
            <person name="Dasanayake M."/>
            <person name="Beemster G."/>
            <person name="Schnittger A."/>
            <person name="Larkin J.C."/>
        </authorList>
    </citation>
    <scope>GENE FAMILY</scope>
    <scope>NOMENCLATURE</scope>
</reference>
<name>SMR8_ARATH</name>